<gene>
    <name evidence="1" type="primary">fusA</name>
    <name type="ordered locus">MRA_0693</name>
</gene>
<accession>A5U070</accession>
<comment type="function">
    <text evidence="1">Catalyzes the GTP-dependent ribosomal translocation step during translation elongation. During this step, the ribosome changes from the pre-translocational (PRE) to the post-translocational (POST) state as the newly formed A-site-bound peptidyl-tRNA and P-site-bound deacylated tRNA move to the P and E sites, respectively. Catalyzes the coordinated movement of the two tRNA molecules, the mRNA and conformational changes in the ribosome.</text>
</comment>
<comment type="subcellular location">
    <subcellularLocation>
        <location evidence="1">Cytoplasm</location>
    </subcellularLocation>
</comment>
<comment type="similarity">
    <text evidence="1">Belongs to the TRAFAC class translation factor GTPase superfamily. Classic translation factor GTPase family. EF-G/EF-2 subfamily.</text>
</comment>
<keyword id="KW-0963">Cytoplasm</keyword>
<keyword id="KW-0251">Elongation factor</keyword>
<keyword id="KW-0342">GTP-binding</keyword>
<keyword id="KW-0547">Nucleotide-binding</keyword>
<keyword id="KW-0648">Protein biosynthesis</keyword>
<keyword id="KW-1185">Reference proteome</keyword>
<evidence type="ECO:0000255" key="1">
    <source>
        <dbReference type="HAMAP-Rule" id="MF_00054"/>
    </source>
</evidence>
<protein>
    <recommendedName>
        <fullName evidence="1">Elongation factor G</fullName>
        <shortName evidence="1">EF-G</shortName>
    </recommendedName>
</protein>
<name>EFG_MYCTA</name>
<organism>
    <name type="scientific">Mycobacterium tuberculosis (strain ATCC 25177 / H37Ra)</name>
    <dbReference type="NCBI Taxonomy" id="419947"/>
    <lineage>
        <taxon>Bacteria</taxon>
        <taxon>Bacillati</taxon>
        <taxon>Actinomycetota</taxon>
        <taxon>Actinomycetes</taxon>
        <taxon>Mycobacteriales</taxon>
        <taxon>Mycobacteriaceae</taxon>
        <taxon>Mycobacterium</taxon>
        <taxon>Mycobacterium tuberculosis complex</taxon>
    </lineage>
</organism>
<proteinExistence type="inferred from homology"/>
<feature type="chain" id="PRO_1000008856" description="Elongation factor G">
    <location>
        <begin position="1"/>
        <end position="701"/>
    </location>
</feature>
<feature type="domain" description="tr-type G">
    <location>
        <begin position="11"/>
        <end position="287"/>
    </location>
</feature>
<feature type="binding site" evidence="1">
    <location>
        <begin position="20"/>
        <end position="27"/>
    </location>
    <ligand>
        <name>GTP</name>
        <dbReference type="ChEBI" id="CHEBI:37565"/>
    </ligand>
</feature>
<feature type="binding site" evidence="1">
    <location>
        <begin position="84"/>
        <end position="88"/>
    </location>
    <ligand>
        <name>GTP</name>
        <dbReference type="ChEBI" id="CHEBI:37565"/>
    </ligand>
</feature>
<feature type="binding site" evidence="1">
    <location>
        <begin position="138"/>
        <end position="141"/>
    </location>
    <ligand>
        <name>GTP</name>
        <dbReference type="ChEBI" id="CHEBI:37565"/>
    </ligand>
</feature>
<sequence length="701" mass="77203">MAQKDVLTDLSRVRNFGIMAHIDAGKTTTTERILYYTGINYKIGEVHDGAATMDWMEQEQERGITITSAATTTFWKDNQLNIIDTPGHVDFTVEVERNLRVLDGAVAVFDGKEGVEPQSEQVWRQADKYDVPRICFVNKMDKIGADFYFSVRTMGERLGANAVPIQLPVGAEADFEGVVDLVEMNAKVWRGETKLGETYDTVEIPADLAEQAEEYRTKLLEVVAESDEHLLEKYLGGEELTVDEIKGAIRKLTIASEIYPVLCGSAFKNKGVQPMLDAVVDYLPSPLDVPPAIGHAPAKEDEEVVRKATTDEPFAALAFKIATHPFFGKLTYIRVYSGTVESGSQVINATKGKKERLGKLFQMHSNKENPVDRASAGHIYAVIGLKDTTTGDTLSDPNQQIVLESMTFPDPVIEVAIEPKTKSDQEKLSLSIQKLAEEDPTFKVHLDSETGQTVIGGMGELHLDILVDRMRREFKVEANVGKPQVAYKETIKRLVQNVEYTHKKQTGGSGQFAKVIINLEPFTGEEGATYEFESKVTGGRIPREYIPSVDAGAQDAMQYGVLAGYPLVNLKVTLLDGAYHEVDSSEMAFKIAGSQVLKKAAALAQPVILEPIMAVEVTTPEDYMGDVIGDLNSRRGQIQAMEERAGARVVRAHVPLSEMFGYVGDLRSKTQGRANYSMVFDSYSEVPANVSKEIIAKATGE</sequence>
<reference key="1">
    <citation type="journal article" date="2008" name="PLoS ONE">
        <title>Genetic basis of virulence attenuation revealed by comparative genomic analysis of Mycobacterium tuberculosis strain H37Ra versus H37Rv.</title>
        <authorList>
            <person name="Zheng H."/>
            <person name="Lu L."/>
            <person name="Wang B."/>
            <person name="Pu S."/>
            <person name="Zhang X."/>
            <person name="Zhu G."/>
            <person name="Shi W."/>
            <person name="Zhang L."/>
            <person name="Wang H."/>
            <person name="Wang S."/>
            <person name="Zhao G."/>
            <person name="Zhang Y."/>
        </authorList>
    </citation>
    <scope>NUCLEOTIDE SEQUENCE [LARGE SCALE GENOMIC DNA]</scope>
    <source>
        <strain>ATCC 25177 / H37Ra</strain>
    </source>
</reference>
<dbReference type="EMBL" id="CP000611">
    <property type="protein sequence ID" value="ABQ72420.1"/>
    <property type="molecule type" value="Genomic_DNA"/>
</dbReference>
<dbReference type="RefSeq" id="WP_003898554.1">
    <property type="nucleotide sequence ID" value="NZ_CP016972.1"/>
</dbReference>
<dbReference type="SMR" id="A5U070"/>
<dbReference type="GeneID" id="45424646"/>
<dbReference type="KEGG" id="mra:MRA_0693"/>
<dbReference type="eggNOG" id="COG0480">
    <property type="taxonomic scope" value="Bacteria"/>
</dbReference>
<dbReference type="HOGENOM" id="CLU_002794_4_1_11"/>
<dbReference type="Proteomes" id="UP000001988">
    <property type="component" value="Chromosome"/>
</dbReference>
<dbReference type="GO" id="GO:0005737">
    <property type="term" value="C:cytoplasm"/>
    <property type="evidence" value="ECO:0007669"/>
    <property type="project" value="UniProtKB-SubCell"/>
</dbReference>
<dbReference type="GO" id="GO:0005525">
    <property type="term" value="F:GTP binding"/>
    <property type="evidence" value="ECO:0007669"/>
    <property type="project" value="UniProtKB-UniRule"/>
</dbReference>
<dbReference type="GO" id="GO:0003924">
    <property type="term" value="F:GTPase activity"/>
    <property type="evidence" value="ECO:0007669"/>
    <property type="project" value="InterPro"/>
</dbReference>
<dbReference type="GO" id="GO:0003746">
    <property type="term" value="F:translation elongation factor activity"/>
    <property type="evidence" value="ECO:0007669"/>
    <property type="project" value="UniProtKB-UniRule"/>
</dbReference>
<dbReference type="GO" id="GO:0032790">
    <property type="term" value="P:ribosome disassembly"/>
    <property type="evidence" value="ECO:0007669"/>
    <property type="project" value="TreeGrafter"/>
</dbReference>
<dbReference type="CDD" id="cd01886">
    <property type="entry name" value="EF-G"/>
    <property type="match status" value="1"/>
</dbReference>
<dbReference type="CDD" id="cd16262">
    <property type="entry name" value="EFG_III"/>
    <property type="match status" value="1"/>
</dbReference>
<dbReference type="CDD" id="cd01434">
    <property type="entry name" value="EFG_mtEFG1_IV"/>
    <property type="match status" value="1"/>
</dbReference>
<dbReference type="CDD" id="cd03713">
    <property type="entry name" value="EFG_mtEFG_C"/>
    <property type="match status" value="1"/>
</dbReference>
<dbReference type="CDD" id="cd04088">
    <property type="entry name" value="EFG_mtEFG_II"/>
    <property type="match status" value="1"/>
</dbReference>
<dbReference type="FunFam" id="2.40.30.10:FF:000006">
    <property type="entry name" value="Elongation factor G"/>
    <property type="match status" value="1"/>
</dbReference>
<dbReference type="FunFam" id="3.30.230.10:FF:000003">
    <property type="entry name" value="Elongation factor G"/>
    <property type="match status" value="1"/>
</dbReference>
<dbReference type="FunFam" id="3.30.70.240:FF:000001">
    <property type="entry name" value="Elongation factor G"/>
    <property type="match status" value="1"/>
</dbReference>
<dbReference type="FunFam" id="3.30.70.870:FF:000001">
    <property type="entry name" value="Elongation factor G"/>
    <property type="match status" value="1"/>
</dbReference>
<dbReference type="FunFam" id="3.40.50.300:FF:000029">
    <property type="entry name" value="Elongation factor G"/>
    <property type="match status" value="1"/>
</dbReference>
<dbReference type="Gene3D" id="3.30.230.10">
    <property type="match status" value="1"/>
</dbReference>
<dbReference type="Gene3D" id="3.30.70.240">
    <property type="match status" value="1"/>
</dbReference>
<dbReference type="Gene3D" id="3.30.70.870">
    <property type="entry name" value="Elongation Factor G (Translational Gtpase), domain 3"/>
    <property type="match status" value="1"/>
</dbReference>
<dbReference type="Gene3D" id="3.40.50.300">
    <property type="entry name" value="P-loop containing nucleotide triphosphate hydrolases"/>
    <property type="match status" value="1"/>
</dbReference>
<dbReference type="Gene3D" id="2.40.30.10">
    <property type="entry name" value="Translation factors"/>
    <property type="match status" value="1"/>
</dbReference>
<dbReference type="HAMAP" id="MF_00054_B">
    <property type="entry name" value="EF_G_EF_2_B"/>
    <property type="match status" value="1"/>
</dbReference>
<dbReference type="InterPro" id="IPR041095">
    <property type="entry name" value="EFG_II"/>
</dbReference>
<dbReference type="InterPro" id="IPR009022">
    <property type="entry name" value="EFG_III"/>
</dbReference>
<dbReference type="InterPro" id="IPR035647">
    <property type="entry name" value="EFG_III/V"/>
</dbReference>
<dbReference type="InterPro" id="IPR047872">
    <property type="entry name" value="EFG_IV"/>
</dbReference>
<dbReference type="InterPro" id="IPR035649">
    <property type="entry name" value="EFG_V"/>
</dbReference>
<dbReference type="InterPro" id="IPR000640">
    <property type="entry name" value="EFG_V-like"/>
</dbReference>
<dbReference type="InterPro" id="IPR004161">
    <property type="entry name" value="EFTu-like_2"/>
</dbReference>
<dbReference type="InterPro" id="IPR031157">
    <property type="entry name" value="G_TR_CS"/>
</dbReference>
<dbReference type="InterPro" id="IPR027417">
    <property type="entry name" value="P-loop_NTPase"/>
</dbReference>
<dbReference type="InterPro" id="IPR020568">
    <property type="entry name" value="Ribosomal_Su5_D2-typ_SF"/>
</dbReference>
<dbReference type="InterPro" id="IPR014721">
    <property type="entry name" value="Ribsml_uS5_D2-typ_fold_subgr"/>
</dbReference>
<dbReference type="InterPro" id="IPR005225">
    <property type="entry name" value="Small_GTP-bd"/>
</dbReference>
<dbReference type="InterPro" id="IPR000795">
    <property type="entry name" value="T_Tr_GTP-bd_dom"/>
</dbReference>
<dbReference type="InterPro" id="IPR009000">
    <property type="entry name" value="Transl_B-barrel_sf"/>
</dbReference>
<dbReference type="InterPro" id="IPR004540">
    <property type="entry name" value="Transl_elong_EFG/EF2"/>
</dbReference>
<dbReference type="InterPro" id="IPR005517">
    <property type="entry name" value="Transl_elong_EFG/EF2_IV"/>
</dbReference>
<dbReference type="NCBIfam" id="TIGR00484">
    <property type="entry name" value="EF-G"/>
    <property type="match status" value="1"/>
</dbReference>
<dbReference type="NCBIfam" id="NF009381">
    <property type="entry name" value="PRK12740.1-5"/>
    <property type="match status" value="1"/>
</dbReference>
<dbReference type="NCBIfam" id="TIGR00231">
    <property type="entry name" value="small_GTP"/>
    <property type="match status" value="1"/>
</dbReference>
<dbReference type="PANTHER" id="PTHR43261:SF1">
    <property type="entry name" value="RIBOSOME-RELEASING FACTOR 2, MITOCHONDRIAL"/>
    <property type="match status" value="1"/>
</dbReference>
<dbReference type="PANTHER" id="PTHR43261">
    <property type="entry name" value="TRANSLATION ELONGATION FACTOR G-RELATED"/>
    <property type="match status" value="1"/>
</dbReference>
<dbReference type="Pfam" id="PF00679">
    <property type="entry name" value="EFG_C"/>
    <property type="match status" value="1"/>
</dbReference>
<dbReference type="Pfam" id="PF14492">
    <property type="entry name" value="EFG_III"/>
    <property type="match status" value="1"/>
</dbReference>
<dbReference type="Pfam" id="PF03764">
    <property type="entry name" value="EFG_IV"/>
    <property type="match status" value="1"/>
</dbReference>
<dbReference type="Pfam" id="PF00009">
    <property type="entry name" value="GTP_EFTU"/>
    <property type="match status" value="1"/>
</dbReference>
<dbReference type="Pfam" id="PF03144">
    <property type="entry name" value="GTP_EFTU_D2"/>
    <property type="match status" value="1"/>
</dbReference>
<dbReference type="PRINTS" id="PR00315">
    <property type="entry name" value="ELONGATNFCT"/>
</dbReference>
<dbReference type="SMART" id="SM00838">
    <property type="entry name" value="EFG_C"/>
    <property type="match status" value="1"/>
</dbReference>
<dbReference type="SMART" id="SM00889">
    <property type="entry name" value="EFG_IV"/>
    <property type="match status" value="1"/>
</dbReference>
<dbReference type="SUPFAM" id="SSF54980">
    <property type="entry name" value="EF-G C-terminal domain-like"/>
    <property type="match status" value="2"/>
</dbReference>
<dbReference type="SUPFAM" id="SSF52540">
    <property type="entry name" value="P-loop containing nucleoside triphosphate hydrolases"/>
    <property type="match status" value="1"/>
</dbReference>
<dbReference type="SUPFAM" id="SSF54211">
    <property type="entry name" value="Ribosomal protein S5 domain 2-like"/>
    <property type="match status" value="1"/>
</dbReference>
<dbReference type="SUPFAM" id="SSF50447">
    <property type="entry name" value="Translation proteins"/>
    <property type="match status" value="1"/>
</dbReference>
<dbReference type="PROSITE" id="PS00301">
    <property type="entry name" value="G_TR_1"/>
    <property type="match status" value="1"/>
</dbReference>
<dbReference type="PROSITE" id="PS51722">
    <property type="entry name" value="G_TR_2"/>
    <property type="match status" value="1"/>
</dbReference>